<proteinExistence type="inferred from homology"/>
<accession>Q2K4C4</accession>
<comment type="function">
    <text evidence="1">Catalyzes the ferrous insertion into protoporphyrin IX.</text>
</comment>
<comment type="catalytic activity">
    <reaction evidence="1">
        <text>heme b + 2 H(+) = protoporphyrin IX + Fe(2+)</text>
        <dbReference type="Rhea" id="RHEA:22584"/>
        <dbReference type="ChEBI" id="CHEBI:15378"/>
        <dbReference type="ChEBI" id="CHEBI:29033"/>
        <dbReference type="ChEBI" id="CHEBI:57306"/>
        <dbReference type="ChEBI" id="CHEBI:60344"/>
        <dbReference type="EC" id="4.98.1.1"/>
    </reaction>
</comment>
<comment type="pathway">
    <text evidence="1">Porphyrin-containing compound metabolism; protoheme biosynthesis; protoheme from protoporphyrin-IX: step 1/1.</text>
</comment>
<comment type="subcellular location">
    <subcellularLocation>
        <location evidence="1">Cytoplasm</location>
    </subcellularLocation>
</comment>
<comment type="similarity">
    <text evidence="1">Belongs to the ferrochelatase family.</text>
</comment>
<name>HEMH_RHIEC</name>
<evidence type="ECO:0000255" key="1">
    <source>
        <dbReference type="HAMAP-Rule" id="MF_00323"/>
    </source>
</evidence>
<gene>
    <name evidence="1" type="primary">hemH</name>
    <name type="ordered locus">RHE_CH03556</name>
</gene>
<keyword id="KW-0963">Cytoplasm</keyword>
<keyword id="KW-0350">Heme biosynthesis</keyword>
<keyword id="KW-0408">Iron</keyword>
<keyword id="KW-0456">Lyase</keyword>
<keyword id="KW-0479">Metal-binding</keyword>
<keyword id="KW-0627">Porphyrin biosynthesis</keyword>
<keyword id="KW-1185">Reference proteome</keyword>
<dbReference type="EC" id="4.98.1.1" evidence="1"/>
<dbReference type="EMBL" id="CP000133">
    <property type="protein sequence ID" value="ABC92312.1"/>
    <property type="molecule type" value="Genomic_DNA"/>
</dbReference>
<dbReference type="RefSeq" id="WP_011426774.1">
    <property type="nucleotide sequence ID" value="NC_007761.1"/>
</dbReference>
<dbReference type="SMR" id="Q2K4C4"/>
<dbReference type="KEGG" id="ret:RHE_CH03556"/>
<dbReference type="eggNOG" id="COG0276">
    <property type="taxonomic scope" value="Bacteria"/>
</dbReference>
<dbReference type="HOGENOM" id="CLU_018884_0_0_5"/>
<dbReference type="OrthoDB" id="9809741at2"/>
<dbReference type="UniPathway" id="UPA00252">
    <property type="reaction ID" value="UER00325"/>
</dbReference>
<dbReference type="Proteomes" id="UP000001936">
    <property type="component" value="Chromosome"/>
</dbReference>
<dbReference type="GO" id="GO:0005737">
    <property type="term" value="C:cytoplasm"/>
    <property type="evidence" value="ECO:0007669"/>
    <property type="project" value="UniProtKB-SubCell"/>
</dbReference>
<dbReference type="GO" id="GO:0004325">
    <property type="term" value="F:ferrochelatase activity"/>
    <property type="evidence" value="ECO:0007669"/>
    <property type="project" value="UniProtKB-UniRule"/>
</dbReference>
<dbReference type="GO" id="GO:0046872">
    <property type="term" value="F:metal ion binding"/>
    <property type="evidence" value="ECO:0007669"/>
    <property type="project" value="UniProtKB-KW"/>
</dbReference>
<dbReference type="GO" id="GO:0006783">
    <property type="term" value="P:heme biosynthetic process"/>
    <property type="evidence" value="ECO:0007669"/>
    <property type="project" value="UniProtKB-UniRule"/>
</dbReference>
<dbReference type="CDD" id="cd00419">
    <property type="entry name" value="Ferrochelatase_C"/>
    <property type="match status" value="1"/>
</dbReference>
<dbReference type="CDD" id="cd03411">
    <property type="entry name" value="Ferrochelatase_N"/>
    <property type="match status" value="1"/>
</dbReference>
<dbReference type="FunFam" id="3.40.50.1400:FF:000002">
    <property type="entry name" value="Ferrochelatase"/>
    <property type="match status" value="1"/>
</dbReference>
<dbReference type="Gene3D" id="3.40.50.1400">
    <property type="match status" value="2"/>
</dbReference>
<dbReference type="HAMAP" id="MF_00323">
    <property type="entry name" value="Ferrochelatase"/>
    <property type="match status" value="1"/>
</dbReference>
<dbReference type="InterPro" id="IPR001015">
    <property type="entry name" value="Ferrochelatase"/>
</dbReference>
<dbReference type="InterPro" id="IPR019772">
    <property type="entry name" value="Ferrochelatase_AS"/>
</dbReference>
<dbReference type="InterPro" id="IPR033644">
    <property type="entry name" value="Ferrochelatase_C"/>
</dbReference>
<dbReference type="InterPro" id="IPR033659">
    <property type="entry name" value="Ferrochelatase_N"/>
</dbReference>
<dbReference type="NCBIfam" id="TIGR00109">
    <property type="entry name" value="hemH"/>
    <property type="match status" value="1"/>
</dbReference>
<dbReference type="PANTHER" id="PTHR11108">
    <property type="entry name" value="FERROCHELATASE"/>
    <property type="match status" value="1"/>
</dbReference>
<dbReference type="PANTHER" id="PTHR11108:SF1">
    <property type="entry name" value="FERROCHELATASE, MITOCHONDRIAL"/>
    <property type="match status" value="1"/>
</dbReference>
<dbReference type="Pfam" id="PF00762">
    <property type="entry name" value="Ferrochelatase"/>
    <property type="match status" value="1"/>
</dbReference>
<dbReference type="SUPFAM" id="SSF53800">
    <property type="entry name" value="Chelatase"/>
    <property type="match status" value="1"/>
</dbReference>
<dbReference type="PROSITE" id="PS00534">
    <property type="entry name" value="FERROCHELATASE"/>
    <property type="match status" value="1"/>
</dbReference>
<sequence length="344" mass="39703">MTADISLRPADHPAIKSGKIGVLLVNLGTPDGTDYTSMRRYLKEFLTDRRVIEWSPWKWYPILFGIVLNTRPQKVGKAYELIWNKEKNESYLRTYTRNQAELMAKRLHDLANVKVDWAMRYGTPSIASRIETLKQEGCDRILLFPLYPQYAAATTATVNDKAFQKLLSMRWQPALRTVPDYHDDETYIEALAQSVERHLSSLDWKPDMLLASFHGIPMSYFKQGDPYYCQCQKTGRLLRERLGLTQENFMVTFQSRFGPEEWLQPYTDKTVEKLAQDGVKRIAVINPGFVSDCLETLEEIAEQAAHSFHENGGDKFTHIPCLNDSDDGMKVLEKVVRRELQGWV</sequence>
<reference key="1">
    <citation type="journal article" date="2006" name="Proc. Natl. Acad. Sci. U.S.A.">
        <title>The partitioned Rhizobium etli genome: genetic and metabolic redundancy in seven interacting replicons.</title>
        <authorList>
            <person name="Gonzalez V."/>
            <person name="Santamaria R.I."/>
            <person name="Bustos P."/>
            <person name="Hernandez-Gonzalez I."/>
            <person name="Medrano-Soto A."/>
            <person name="Moreno-Hagelsieb G."/>
            <person name="Janga S.C."/>
            <person name="Ramirez M.A."/>
            <person name="Jimenez-Jacinto V."/>
            <person name="Collado-Vides J."/>
            <person name="Davila G."/>
        </authorList>
    </citation>
    <scope>NUCLEOTIDE SEQUENCE [LARGE SCALE GENOMIC DNA]</scope>
    <source>
        <strain>ATCC 51251 / DSM 11541 / JCM 21823 / NBRC 15573 / CFN 42</strain>
    </source>
</reference>
<feature type="chain" id="PRO_1000019358" description="Ferrochelatase">
    <location>
        <begin position="1"/>
        <end position="344"/>
    </location>
</feature>
<feature type="binding site" evidence="1">
    <location>
        <position position="214"/>
    </location>
    <ligand>
        <name>Fe cation</name>
        <dbReference type="ChEBI" id="CHEBI:24875"/>
    </ligand>
</feature>
<feature type="binding site" evidence="1">
    <location>
        <position position="295"/>
    </location>
    <ligand>
        <name>Fe cation</name>
        <dbReference type="ChEBI" id="CHEBI:24875"/>
    </ligand>
</feature>
<organism>
    <name type="scientific">Rhizobium etli (strain ATCC 51251 / DSM 11541 / JCM 21823 / NBRC 15573 / CFN 42)</name>
    <dbReference type="NCBI Taxonomy" id="347834"/>
    <lineage>
        <taxon>Bacteria</taxon>
        <taxon>Pseudomonadati</taxon>
        <taxon>Pseudomonadota</taxon>
        <taxon>Alphaproteobacteria</taxon>
        <taxon>Hyphomicrobiales</taxon>
        <taxon>Rhizobiaceae</taxon>
        <taxon>Rhizobium/Agrobacterium group</taxon>
        <taxon>Rhizobium</taxon>
    </lineage>
</organism>
<protein>
    <recommendedName>
        <fullName evidence="1">Ferrochelatase</fullName>
        <ecNumber evidence="1">4.98.1.1</ecNumber>
    </recommendedName>
    <alternativeName>
        <fullName evidence="1">Heme synthase</fullName>
    </alternativeName>
    <alternativeName>
        <fullName evidence="1">Protoheme ferro-lyase</fullName>
    </alternativeName>
</protein>